<evidence type="ECO:0000255" key="1">
    <source>
        <dbReference type="HAMAP-Rule" id="MF_00300"/>
    </source>
</evidence>
<name>AROC_CERSK</name>
<organism>
    <name type="scientific">Cereibacter sphaeroides (strain KD131 / KCTC 12085)</name>
    <name type="common">Rhodobacter sphaeroides</name>
    <dbReference type="NCBI Taxonomy" id="557760"/>
    <lineage>
        <taxon>Bacteria</taxon>
        <taxon>Pseudomonadati</taxon>
        <taxon>Pseudomonadota</taxon>
        <taxon>Alphaproteobacteria</taxon>
        <taxon>Rhodobacterales</taxon>
        <taxon>Paracoccaceae</taxon>
        <taxon>Cereibacter</taxon>
    </lineage>
</organism>
<sequence length="366" mass="38948">MSYNTFGHIFRVTTWGESHGPALGATVDGCPPGVAIEAEAIQHWLDRRKPGQNRFTTQRQEPDAVRILSGTFEGRSTGTPIQLMIENTDQRSKDYGEIARSFRPGHADIAYHWKYGLRDYRGGGRSSARETAARVAAGGVARAALAALVPGLRIEGYMVQIGPHAIDRARFDADEIERNPFWCPDPDTAALWADYLDGLRKAHDSVGAIVEVRASGVPAGLGAPIYGKLDSDLAAAMMTINAVKGVEIGEGMAAACLTGSANADEIRMGPEGPEFLTNHAGGILGGISTGQDVVVRFAVKPTSSILTPRRSVTTDGREVEVVTKGRHDPCVGIRAVPVGEAMMACVLLDHLLLDRGQTGGLRGTIG</sequence>
<protein>
    <recommendedName>
        <fullName evidence="1">Chorismate synthase</fullName>
        <shortName evidence="1">CS</shortName>
        <ecNumber evidence="1">4.2.3.5</ecNumber>
    </recommendedName>
    <alternativeName>
        <fullName evidence="1">5-enolpyruvylshikimate-3-phosphate phospholyase</fullName>
    </alternativeName>
</protein>
<keyword id="KW-0028">Amino-acid biosynthesis</keyword>
<keyword id="KW-0057">Aromatic amino acid biosynthesis</keyword>
<keyword id="KW-0274">FAD</keyword>
<keyword id="KW-0285">Flavoprotein</keyword>
<keyword id="KW-0288">FMN</keyword>
<keyword id="KW-0456">Lyase</keyword>
<keyword id="KW-0521">NADP</keyword>
<feature type="chain" id="PRO_1000132785" description="Chorismate synthase">
    <location>
        <begin position="1"/>
        <end position="366"/>
    </location>
</feature>
<feature type="binding site" evidence="1">
    <location>
        <position position="48"/>
    </location>
    <ligand>
        <name>NADP(+)</name>
        <dbReference type="ChEBI" id="CHEBI:58349"/>
    </ligand>
</feature>
<feature type="binding site" evidence="1">
    <location>
        <position position="54"/>
    </location>
    <ligand>
        <name>NADP(+)</name>
        <dbReference type="ChEBI" id="CHEBI:58349"/>
    </ligand>
</feature>
<feature type="binding site" evidence="1">
    <location>
        <begin position="125"/>
        <end position="127"/>
    </location>
    <ligand>
        <name>FMN</name>
        <dbReference type="ChEBI" id="CHEBI:58210"/>
    </ligand>
</feature>
<feature type="binding site" evidence="1">
    <location>
        <begin position="241"/>
        <end position="242"/>
    </location>
    <ligand>
        <name>FMN</name>
        <dbReference type="ChEBI" id="CHEBI:58210"/>
    </ligand>
</feature>
<feature type="binding site" evidence="1">
    <location>
        <position position="285"/>
    </location>
    <ligand>
        <name>FMN</name>
        <dbReference type="ChEBI" id="CHEBI:58210"/>
    </ligand>
</feature>
<feature type="binding site" evidence="1">
    <location>
        <begin position="300"/>
        <end position="304"/>
    </location>
    <ligand>
        <name>FMN</name>
        <dbReference type="ChEBI" id="CHEBI:58210"/>
    </ligand>
</feature>
<feature type="binding site" evidence="1">
    <location>
        <position position="326"/>
    </location>
    <ligand>
        <name>FMN</name>
        <dbReference type="ChEBI" id="CHEBI:58210"/>
    </ligand>
</feature>
<comment type="function">
    <text evidence="1">Catalyzes the anti-1,4-elimination of the C-3 phosphate and the C-6 proR hydrogen from 5-enolpyruvylshikimate-3-phosphate (EPSP) to yield chorismate, which is the branch point compound that serves as the starting substrate for the three terminal pathways of aromatic amino acid biosynthesis. This reaction introduces a second double bond into the aromatic ring system.</text>
</comment>
<comment type="catalytic activity">
    <reaction evidence="1">
        <text>5-O-(1-carboxyvinyl)-3-phosphoshikimate = chorismate + phosphate</text>
        <dbReference type="Rhea" id="RHEA:21020"/>
        <dbReference type="ChEBI" id="CHEBI:29748"/>
        <dbReference type="ChEBI" id="CHEBI:43474"/>
        <dbReference type="ChEBI" id="CHEBI:57701"/>
        <dbReference type="EC" id="4.2.3.5"/>
    </reaction>
</comment>
<comment type="cofactor">
    <cofactor evidence="1">
        <name>FMNH2</name>
        <dbReference type="ChEBI" id="CHEBI:57618"/>
    </cofactor>
    <text evidence="1">Reduced FMN (FMNH(2)).</text>
</comment>
<comment type="pathway">
    <text evidence="1">Metabolic intermediate biosynthesis; chorismate biosynthesis; chorismate from D-erythrose 4-phosphate and phosphoenolpyruvate: step 7/7.</text>
</comment>
<comment type="subunit">
    <text evidence="1">Homotetramer.</text>
</comment>
<comment type="similarity">
    <text evidence="1">Belongs to the chorismate synthase family.</text>
</comment>
<reference key="1">
    <citation type="journal article" date="2009" name="J. Bacteriol.">
        <title>Complete genome sequence of Rhodobacter sphaeroides KD131.</title>
        <authorList>
            <person name="Lim S.-K."/>
            <person name="Kim S.J."/>
            <person name="Cha S.H."/>
            <person name="Oh Y.-K."/>
            <person name="Rhee H.-J."/>
            <person name="Kim M.-S."/>
            <person name="Lee J.K."/>
        </authorList>
    </citation>
    <scope>NUCLEOTIDE SEQUENCE [LARGE SCALE GENOMIC DNA]</scope>
    <source>
        <strain>KD131 / KCTC 12085</strain>
    </source>
</reference>
<dbReference type="EC" id="4.2.3.5" evidence="1"/>
<dbReference type="EMBL" id="CP001150">
    <property type="protein sequence ID" value="ACM02648.1"/>
    <property type="molecule type" value="Genomic_DNA"/>
</dbReference>
<dbReference type="RefSeq" id="WP_002721996.1">
    <property type="nucleotide sequence ID" value="NC_011963.1"/>
</dbReference>
<dbReference type="SMR" id="B9KQP8"/>
<dbReference type="GeneID" id="67448159"/>
<dbReference type="KEGG" id="rsk:RSKD131_2788"/>
<dbReference type="HOGENOM" id="CLU_034547_0_0_5"/>
<dbReference type="UniPathway" id="UPA00053">
    <property type="reaction ID" value="UER00090"/>
</dbReference>
<dbReference type="GO" id="GO:0005829">
    <property type="term" value="C:cytosol"/>
    <property type="evidence" value="ECO:0007669"/>
    <property type="project" value="TreeGrafter"/>
</dbReference>
<dbReference type="GO" id="GO:0004107">
    <property type="term" value="F:chorismate synthase activity"/>
    <property type="evidence" value="ECO:0007669"/>
    <property type="project" value="UniProtKB-UniRule"/>
</dbReference>
<dbReference type="GO" id="GO:0010181">
    <property type="term" value="F:FMN binding"/>
    <property type="evidence" value="ECO:0007669"/>
    <property type="project" value="TreeGrafter"/>
</dbReference>
<dbReference type="GO" id="GO:0008652">
    <property type="term" value="P:amino acid biosynthetic process"/>
    <property type="evidence" value="ECO:0007669"/>
    <property type="project" value="UniProtKB-KW"/>
</dbReference>
<dbReference type="GO" id="GO:0009073">
    <property type="term" value="P:aromatic amino acid family biosynthetic process"/>
    <property type="evidence" value="ECO:0007669"/>
    <property type="project" value="UniProtKB-KW"/>
</dbReference>
<dbReference type="GO" id="GO:0009423">
    <property type="term" value="P:chorismate biosynthetic process"/>
    <property type="evidence" value="ECO:0007669"/>
    <property type="project" value="UniProtKB-UniRule"/>
</dbReference>
<dbReference type="CDD" id="cd07304">
    <property type="entry name" value="Chorismate_synthase"/>
    <property type="match status" value="1"/>
</dbReference>
<dbReference type="Gene3D" id="3.60.150.10">
    <property type="entry name" value="Chorismate synthase AroC"/>
    <property type="match status" value="1"/>
</dbReference>
<dbReference type="HAMAP" id="MF_00300">
    <property type="entry name" value="Chorismate_synth"/>
    <property type="match status" value="1"/>
</dbReference>
<dbReference type="InterPro" id="IPR000453">
    <property type="entry name" value="Chorismate_synth"/>
</dbReference>
<dbReference type="InterPro" id="IPR035904">
    <property type="entry name" value="Chorismate_synth_AroC_sf"/>
</dbReference>
<dbReference type="InterPro" id="IPR020541">
    <property type="entry name" value="Chorismate_synthase_CS"/>
</dbReference>
<dbReference type="NCBIfam" id="TIGR00033">
    <property type="entry name" value="aroC"/>
    <property type="match status" value="1"/>
</dbReference>
<dbReference type="NCBIfam" id="NF003793">
    <property type="entry name" value="PRK05382.1"/>
    <property type="match status" value="1"/>
</dbReference>
<dbReference type="PANTHER" id="PTHR21085">
    <property type="entry name" value="CHORISMATE SYNTHASE"/>
    <property type="match status" value="1"/>
</dbReference>
<dbReference type="PANTHER" id="PTHR21085:SF0">
    <property type="entry name" value="CHORISMATE SYNTHASE"/>
    <property type="match status" value="1"/>
</dbReference>
<dbReference type="Pfam" id="PF01264">
    <property type="entry name" value="Chorismate_synt"/>
    <property type="match status" value="1"/>
</dbReference>
<dbReference type="PIRSF" id="PIRSF001456">
    <property type="entry name" value="Chorismate_synth"/>
    <property type="match status" value="1"/>
</dbReference>
<dbReference type="SUPFAM" id="SSF103263">
    <property type="entry name" value="Chorismate synthase, AroC"/>
    <property type="match status" value="1"/>
</dbReference>
<dbReference type="PROSITE" id="PS00787">
    <property type="entry name" value="CHORISMATE_SYNTHASE_1"/>
    <property type="match status" value="1"/>
</dbReference>
<dbReference type="PROSITE" id="PS00789">
    <property type="entry name" value="CHORISMATE_SYNTHASE_3"/>
    <property type="match status" value="1"/>
</dbReference>
<gene>
    <name evidence="1" type="primary">aroC</name>
    <name type="ordered locus">RSKD131_2788</name>
</gene>
<accession>B9KQP8</accession>
<proteinExistence type="inferred from homology"/>